<sequence>MLKIIRAGMYTTVQDGGRHGFRQSGISHCGALDMPALRIANLLVGNDANAPALEITLGQLTVEFETDGWFALTGAGCEARLDDNAVWTGWRLPMKAGQRLTLKRPQHGMRSYLAVAGGIDVPPVMGSCSTDLKVGIGGLEGRLLKDGDRLPIGKSKRDSMEAQGVKQLLWGNRIRALPGPEYHEFDRASQDAFWRSPWQLSSQSNRMGYRLQGQILKRTTDRELLSHGLLPGVVQVPHNGQPIVLMNDAQTTGGYPRIACIIEADMYHLAQIPLGQPIHFVQCSLEEALKARQDQQRYFEQLAWRLHNEN</sequence>
<dbReference type="EC" id="3.5.2.9" evidence="2"/>
<dbReference type="EMBL" id="U00096">
    <property type="protein sequence ID" value="AAC73806.1"/>
    <property type="molecule type" value="Genomic_DNA"/>
</dbReference>
<dbReference type="EMBL" id="AP009048">
    <property type="protein sequence ID" value="BAA35376.1"/>
    <property type="molecule type" value="Genomic_DNA"/>
</dbReference>
<dbReference type="PIR" id="G64806">
    <property type="entry name" value="G64806"/>
</dbReference>
<dbReference type="RefSeq" id="NP_415240.1">
    <property type="nucleotide sequence ID" value="NC_000913.3"/>
</dbReference>
<dbReference type="RefSeq" id="WP_000912724.1">
    <property type="nucleotide sequence ID" value="NZ_SSZK01000033.1"/>
</dbReference>
<dbReference type="PDB" id="5DUD">
    <property type="method" value="X-ray"/>
    <property type="resolution" value="2.80 A"/>
    <property type="chains" value="A/C=1-310"/>
</dbReference>
<dbReference type="PDBsum" id="5DUD"/>
<dbReference type="SMR" id="P75745"/>
<dbReference type="BioGRID" id="4259922">
    <property type="interactions" value="249"/>
</dbReference>
<dbReference type="BioGRID" id="849693">
    <property type="interactions" value="1"/>
</dbReference>
<dbReference type="DIP" id="DIP-11397N"/>
<dbReference type="FunCoup" id="P75745">
    <property type="interactions" value="151"/>
</dbReference>
<dbReference type="IntAct" id="P75745">
    <property type="interactions" value="7"/>
</dbReference>
<dbReference type="STRING" id="511145.b0712"/>
<dbReference type="jPOST" id="P75745"/>
<dbReference type="PaxDb" id="511145-b0712"/>
<dbReference type="EnsemblBacteria" id="AAC73806">
    <property type="protein sequence ID" value="AAC73806"/>
    <property type="gene ID" value="b0712"/>
</dbReference>
<dbReference type="GeneID" id="945317"/>
<dbReference type="KEGG" id="ecj:JW0702"/>
<dbReference type="KEGG" id="eco:b0712"/>
<dbReference type="KEGG" id="ecoc:C3026_03560"/>
<dbReference type="PATRIC" id="fig|1411691.4.peg.1561"/>
<dbReference type="EchoBASE" id="EB3091"/>
<dbReference type="eggNOG" id="COG1984">
    <property type="taxonomic scope" value="Bacteria"/>
</dbReference>
<dbReference type="HOGENOM" id="CLU_028967_0_3_6"/>
<dbReference type="InParanoid" id="P75745"/>
<dbReference type="OMA" id="YPRMGNI"/>
<dbReference type="OrthoDB" id="9768696at2"/>
<dbReference type="PhylomeDB" id="P75745"/>
<dbReference type="BioCyc" id="EcoCyc:G6381-MONOMER"/>
<dbReference type="BioCyc" id="MetaCyc:G6381-MONOMER"/>
<dbReference type="PRO" id="PR:P75745"/>
<dbReference type="Proteomes" id="UP000000625">
    <property type="component" value="Chromosome"/>
</dbReference>
<dbReference type="GO" id="GO:0005829">
    <property type="term" value="C:cytosol"/>
    <property type="evidence" value="ECO:0000314"/>
    <property type="project" value="EcoCyc"/>
</dbReference>
<dbReference type="GO" id="GO:0017168">
    <property type="term" value="F:5-oxoprolinase (ATP-hydrolyzing) activity"/>
    <property type="evidence" value="ECO:0007669"/>
    <property type="project" value="UniProtKB-EC"/>
</dbReference>
<dbReference type="GO" id="GO:0005524">
    <property type="term" value="F:ATP binding"/>
    <property type="evidence" value="ECO:0007669"/>
    <property type="project" value="UniProtKB-KW"/>
</dbReference>
<dbReference type="FunFam" id="2.40.100.10:FF:000027">
    <property type="entry name" value="Allophanate hydrolase subunit 2"/>
    <property type="match status" value="1"/>
</dbReference>
<dbReference type="Gene3D" id="2.40.100.10">
    <property type="entry name" value="Cyclophilin-like"/>
    <property type="match status" value="1"/>
</dbReference>
<dbReference type="InterPro" id="IPR053526">
    <property type="entry name" value="5-oxoprolinase_subunit"/>
</dbReference>
<dbReference type="InterPro" id="IPR003778">
    <property type="entry name" value="CT_A_B"/>
</dbReference>
<dbReference type="InterPro" id="IPR029000">
    <property type="entry name" value="Cyclophilin-like_dom_sf"/>
</dbReference>
<dbReference type="InterPro" id="IPR052708">
    <property type="entry name" value="PxpC"/>
</dbReference>
<dbReference type="NCBIfam" id="NF045499">
    <property type="entry name" value="PxpC_5OPro"/>
    <property type="match status" value="1"/>
</dbReference>
<dbReference type="NCBIfam" id="TIGR00724">
    <property type="entry name" value="urea_amlyse_rel"/>
    <property type="match status" value="1"/>
</dbReference>
<dbReference type="PANTHER" id="PTHR43309">
    <property type="entry name" value="5-OXOPROLINASE SUBUNIT C"/>
    <property type="match status" value="1"/>
</dbReference>
<dbReference type="PANTHER" id="PTHR43309:SF3">
    <property type="entry name" value="5-OXOPROLINASE SUBUNIT C"/>
    <property type="match status" value="1"/>
</dbReference>
<dbReference type="Pfam" id="PF02626">
    <property type="entry name" value="CT_A_B"/>
    <property type="match status" value="1"/>
</dbReference>
<dbReference type="SMART" id="SM00797">
    <property type="entry name" value="AHS2"/>
    <property type="match status" value="1"/>
</dbReference>
<dbReference type="SUPFAM" id="SSF50891">
    <property type="entry name" value="Cyclophilin-like"/>
    <property type="match status" value="1"/>
</dbReference>
<protein>
    <recommendedName>
        <fullName evidence="4">5-oxoprolinase subunit C</fullName>
        <shortName evidence="4">5-OPase subunit C</shortName>
        <ecNumber evidence="2">3.5.2.9</ecNumber>
    </recommendedName>
    <alternativeName>
        <fullName evidence="4">5-oxoprolinase (ATP-hydrolyzing) subunit C</fullName>
    </alternativeName>
</protein>
<proteinExistence type="evidence at protein level"/>
<comment type="function">
    <text evidence="2">Catalyzes the cleavage of 5-oxoproline to form L-glutamate coupled to the hydrolysis of ATP to ADP and inorganic phosphate.</text>
</comment>
<comment type="catalytic activity">
    <reaction evidence="2">
        <text>5-oxo-L-proline + ATP + 2 H2O = L-glutamate + ADP + phosphate + H(+)</text>
        <dbReference type="Rhea" id="RHEA:10348"/>
        <dbReference type="ChEBI" id="CHEBI:15377"/>
        <dbReference type="ChEBI" id="CHEBI:15378"/>
        <dbReference type="ChEBI" id="CHEBI:29985"/>
        <dbReference type="ChEBI" id="CHEBI:30616"/>
        <dbReference type="ChEBI" id="CHEBI:43474"/>
        <dbReference type="ChEBI" id="CHEBI:58402"/>
        <dbReference type="ChEBI" id="CHEBI:456216"/>
        <dbReference type="EC" id="3.5.2.9"/>
    </reaction>
</comment>
<comment type="subunit">
    <text evidence="1">Forms a complex composed of PxpA, PxpB and PxpC.</text>
</comment>
<comment type="disruption phenotype">
    <text evidence="2">Deletion of the gene slows growth on minimal medium with ammonium as nitrogen source.</text>
</comment>
<comment type="similarity">
    <text evidence="4">Belongs to the PxpC family.</text>
</comment>
<organism>
    <name type="scientific">Escherichia coli (strain K12)</name>
    <dbReference type="NCBI Taxonomy" id="83333"/>
    <lineage>
        <taxon>Bacteria</taxon>
        <taxon>Pseudomonadati</taxon>
        <taxon>Pseudomonadota</taxon>
        <taxon>Gammaproteobacteria</taxon>
        <taxon>Enterobacterales</taxon>
        <taxon>Enterobacteriaceae</taxon>
        <taxon>Escherichia</taxon>
    </lineage>
</organism>
<name>PXPC_ECOLI</name>
<reference key="1">
    <citation type="journal article" date="1996" name="DNA Res.">
        <title>A 718-kb DNA sequence of the Escherichia coli K-12 genome corresponding to the 12.7-28.0 min region on the linkage map.</title>
        <authorList>
            <person name="Oshima T."/>
            <person name="Aiba H."/>
            <person name="Baba T."/>
            <person name="Fujita K."/>
            <person name="Hayashi K."/>
            <person name="Honjo A."/>
            <person name="Ikemoto K."/>
            <person name="Inada T."/>
            <person name="Itoh T."/>
            <person name="Kajihara M."/>
            <person name="Kanai K."/>
            <person name="Kashimoto K."/>
            <person name="Kimura S."/>
            <person name="Kitagawa M."/>
            <person name="Makino K."/>
            <person name="Masuda S."/>
            <person name="Miki T."/>
            <person name="Mizobuchi K."/>
            <person name="Mori H."/>
            <person name="Motomura K."/>
            <person name="Nakamura Y."/>
            <person name="Nashimoto H."/>
            <person name="Nishio Y."/>
            <person name="Saito N."/>
            <person name="Sampei G."/>
            <person name="Seki Y."/>
            <person name="Tagami H."/>
            <person name="Takemoto K."/>
            <person name="Wada C."/>
            <person name="Yamamoto Y."/>
            <person name="Yano M."/>
            <person name="Horiuchi T."/>
        </authorList>
    </citation>
    <scope>NUCLEOTIDE SEQUENCE [LARGE SCALE GENOMIC DNA]</scope>
    <source>
        <strain>K12 / W3110 / ATCC 27325 / DSM 5911</strain>
    </source>
</reference>
<reference key="2">
    <citation type="journal article" date="1997" name="Science">
        <title>The complete genome sequence of Escherichia coli K-12.</title>
        <authorList>
            <person name="Blattner F.R."/>
            <person name="Plunkett G. III"/>
            <person name="Bloch C.A."/>
            <person name="Perna N.T."/>
            <person name="Burland V."/>
            <person name="Riley M."/>
            <person name="Collado-Vides J."/>
            <person name="Glasner J.D."/>
            <person name="Rode C.K."/>
            <person name="Mayhew G.F."/>
            <person name="Gregor J."/>
            <person name="Davis N.W."/>
            <person name="Kirkpatrick H.A."/>
            <person name="Goeden M.A."/>
            <person name="Rose D.J."/>
            <person name="Mau B."/>
            <person name="Shao Y."/>
        </authorList>
    </citation>
    <scope>NUCLEOTIDE SEQUENCE [LARGE SCALE GENOMIC DNA]</scope>
    <source>
        <strain>K12 / MG1655 / ATCC 47076</strain>
    </source>
</reference>
<reference key="3">
    <citation type="journal article" date="2006" name="Mol. Syst. Biol.">
        <title>Highly accurate genome sequences of Escherichia coli K-12 strains MG1655 and W3110.</title>
        <authorList>
            <person name="Hayashi K."/>
            <person name="Morooka N."/>
            <person name="Yamamoto Y."/>
            <person name="Fujita K."/>
            <person name="Isono K."/>
            <person name="Choi S."/>
            <person name="Ohtsubo E."/>
            <person name="Baba T."/>
            <person name="Wanner B.L."/>
            <person name="Mori H."/>
            <person name="Horiuchi T."/>
        </authorList>
    </citation>
    <scope>NUCLEOTIDE SEQUENCE [LARGE SCALE GENOMIC DNA]</scope>
    <source>
        <strain>K12 / W3110 / ATCC 27325 / DSM 5911</strain>
    </source>
</reference>
<reference key="4">
    <citation type="journal article" date="2017" name="J. Biol. Chem.">
        <title>Discovery of a widespread prokaryotic 5-oxoprolinase that was hiding in plain sight.</title>
        <authorList>
            <person name="Niehaus T.D."/>
            <person name="Elbadawi-Sidhu M."/>
            <person name="de Crecy-Lagard V."/>
            <person name="Fiehn O."/>
            <person name="Hanson A.D."/>
        </authorList>
    </citation>
    <scope>FUNCTION</scope>
    <scope>CATALYTIC ACTIVITY</scope>
    <scope>DISRUPTION PHENOTYPE</scope>
</reference>
<reference evidence="5" key="5">
    <citation type="submission" date="2015-09" db="PDB data bank">
        <title>Crystal structure of E. coli YbgJK.</title>
        <authorList>
            <person name="Arbing M.A."/>
            <person name="Kaufmann M."/>
            <person name="Shin A."/>
            <person name="Medrano-Soto A."/>
            <person name="Cascio D."/>
            <person name="Eisenberg D."/>
        </authorList>
    </citation>
    <scope>X-RAY CRYSTALLOGRAPHY (2.80 ANGSTROMS)</scope>
</reference>
<evidence type="ECO:0000250" key="1">
    <source>
        <dbReference type="UniProtKB" id="Q7WY77"/>
    </source>
</evidence>
<evidence type="ECO:0000269" key="2">
    <source>
    </source>
</evidence>
<evidence type="ECO:0000303" key="3">
    <source>
    </source>
</evidence>
<evidence type="ECO:0000305" key="4"/>
<evidence type="ECO:0007744" key="5">
    <source>
        <dbReference type="PDB" id="5DUD"/>
    </source>
</evidence>
<evidence type="ECO:0007829" key="6">
    <source>
        <dbReference type="PDB" id="5DUD"/>
    </source>
</evidence>
<accession>P75745</accession>
<feature type="chain" id="PRO_0000168709" description="5-oxoprolinase subunit C">
    <location>
        <begin position="1"/>
        <end position="310"/>
    </location>
</feature>
<feature type="strand" evidence="6">
    <location>
        <begin position="2"/>
        <end position="5"/>
    </location>
</feature>
<feature type="strand" evidence="6">
    <location>
        <begin position="12"/>
        <end position="14"/>
    </location>
</feature>
<feature type="helix" evidence="6">
    <location>
        <begin position="22"/>
        <end position="24"/>
    </location>
</feature>
<feature type="helix" evidence="6">
    <location>
        <begin position="34"/>
        <end position="44"/>
    </location>
</feature>
<feature type="strand" evidence="6">
    <location>
        <begin position="52"/>
        <end position="57"/>
    </location>
</feature>
<feature type="strand" evidence="6">
    <location>
        <begin position="60"/>
        <end position="64"/>
    </location>
</feature>
<feature type="strand" evidence="6">
    <location>
        <begin position="68"/>
        <end position="75"/>
    </location>
</feature>
<feature type="strand" evidence="6">
    <location>
        <begin position="88"/>
        <end position="90"/>
    </location>
</feature>
<feature type="strand" evidence="6">
    <location>
        <begin position="92"/>
        <end position="94"/>
    </location>
</feature>
<feature type="strand" evidence="6">
    <location>
        <begin position="99"/>
        <end position="102"/>
    </location>
</feature>
<feature type="strand" evidence="6">
    <location>
        <begin position="109"/>
        <end position="115"/>
    </location>
</feature>
<feature type="turn" evidence="6">
    <location>
        <begin position="132"/>
        <end position="135"/>
    </location>
</feature>
<feature type="turn" evidence="6">
    <location>
        <begin position="138"/>
        <end position="141"/>
    </location>
</feature>
<feature type="strand" evidence="6">
    <location>
        <begin position="172"/>
        <end position="178"/>
    </location>
</feature>
<feature type="helix" evidence="6">
    <location>
        <begin position="182"/>
        <end position="184"/>
    </location>
</feature>
<feature type="helix" evidence="6">
    <location>
        <begin position="187"/>
        <end position="195"/>
    </location>
</feature>
<feature type="strand" evidence="6">
    <location>
        <begin position="198"/>
        <end position="200"/>
    </location>
</feature>
<feature type="strand" evidence="6">
    <location>
        <begin position="206"/>
        <end position="213"/>
    </location>
</feature>
<feature type="strand" evidence="6">
    <location>
        <begin position="233"/>
        <end position="235"/>
    </location>
</feature>
<feature type="strand" evidence="6">
    <location>
        <begin position="243"/>
        <end position="245"/>
    </location>
</feature>
<feature type="strand" evidence="6">
    <location>
        <begin position="251"/>
        <end position="253"/>
    </location>
</feature>
<feature type="strand" evidence="6">
    <location>
        <begin position="257"/>
        <end position="261"/>
    </location>
</feature>
<feature type="turn" evidence="6">
    <location>
        <begin position="263"/>
        <end position="265"/>
    </location>
</feature>
<feature type="helix" evidence="6">
    <location>
        <begin position="266"/>
        <end position="271"/>
    </location>
</feature>
<feature type="strand" evidence="6">
    <location>
        <begin position="276"/>
        <end position="282"/>
    </location>
</feature>
<feature type="helix" evidence="6">
    <location>
        <begin position="285"/>
        <end position="302"/>
    </location>
</feature>
<keyword id="KW-0002">3D-structure</keyword>
<keyword id="KW-0067">ATP-binding</keyword>
<keyword id="KW-0378">Hydrolase</keyword>
<keyword id="KW-0547">Nucleotide-binding</keyword>
<keyword id="KW-1185">Reference proteome</keyword>
<gene>
    <name evidence="3" type="primary">pxpC</name>
    <name type="synonym">ybgK</name>
    <name type="ordered locus">b0712</name>
    <name type="ordered locus">JW0702</name>
</gene>